<name>YBJL_ECO81</name>
<dbReference type="EMBL" id="CU928162">
    <property type="protein sequence ID" value="CAR07016.1"/>
    <property type="molecule type" value="Genomic_DNA"/>
</dbReference>
<dbReference type="RefSeq" id="WP_001024876.1">
    <property type="nucleotide sequence ID" value="NC_011745.1"/>
</dbReference>
<dbReference type="SMR" id="B7MQV0"/>
<dbReference type="KEGG" id="ecq:ECED1_0811"/>
<dbReference type="HOGENOM" id="CLU_035023_2_2_6"/>
<dbReference type="Proteomes" id="UP000000748">
    <property type="component" value="Chromosome"/>
</dbReference>
<dbReference type="GO" id="GO:0005886">
    <property type="term" value="C:plasma membrane"/>
    <property type="evidence" value="ECO:0007669"/>
    <property type="project" value="UniProtKB-SubCell"/>
</dbReference>
<dbReference type="GO" id="GO:0008324">
    <property type="term" value="F:monoatomic cation transmembrane transporter activity"/>
    <property type="evidence" value="ECO:0007669"/>
    <property type="project" value="InterPro"/>
</dbReference>
<dbReference type="GO" id="GO:0006813">
    <property type="term" value="P:potassium ion transport"/>
    <property type="evidence" value="ECO:0007669"/>
    <property type="project" value="InterPro"/>
</dbReference>
<dbReference type="FunFam" id="3.30.70.1450:FF:000003">
    <property type="entry name" value="Putative transport protein YbjL"/>
    <property type="match status" value="1"/>
</dbReference>
<dbReference type="Gene3D" id="3.30.70.1450">
    <property type="entry name" value="Regulator of K+ conductance, C-terminal domain"/>
    <property type="match status" value="2"/>
</dbReference>
<dbReference type="HAMAP" id="MF_01015">
    <property type="entry name" value="YbjL"/>
    <property type="match status" value="1"/>
</dbReference>
<dbReference type="InterPro" id="IPR050144">
    <property type="entry name" value="AAE_transporter"/>
</dbReference>
<dbReference type="InterPro" id="IPR006037">
    <property type="entry name" value="RCK_C"/>
</dbReference>
<dbReference type="InterPro" id="IPR036721">
    <property type="entry name" value="RCK_C_sf"/>
</dbReference>
<dbReference type="InterPro" id="IPR023017">
    <property type="entry name" value="Transp_YbjL_put"/>
</dbReference>
<dbReference type="InterPro" id="IPR006512">
    <property type="entry name" value="YidE_YbjL"/>
</dbReference>
<dbReference type="NCBIfam" id="NF003440">
    <property type="entry name" value="PRK04972.1"/>
    <property type="match status" value="1"/>
</dbReference>
<dbReference type="NCBIfam" id="TIGR01625">
    <property type="entry name" value="YidE_YbjL_dupl"/>
    <property type="match status" value="2"/>
</dbReference>
<dbReference type="PANTHER" id="PTHR30445">
    <property type="entry name" value="K(+)_H(+) ANTIPORTER SUBUNIT KHTT"/>
    <property type="match status" value="1"/>
</dbReference>
<dbReference type="PANTHER" id="PTHR30445:SF10">
    <property type="entry name" value="TRANSPORT PROTEIN YBJL-RELATED"/>
    <property type="match status" value="1"/>
</dbReference>
<dbReference type="Pfam" id="PF06826">
    <property type="entry name" value="Asp-Al_Ex"/>
    <property type="match status" value="2"/>
</dbReference>
<dbReference type="Pfam" id="PF02080">
    <property type="entry name" value="TrkA_C"/>
    <property type="match status" value="2"/>
</dbReference>
<dbReference type="SUPFAM" id="SSF116726">
    <property type="entry name" value="TrkA C-terminal domain-like"/>
    <property type="match status" value="2"/>
</dbReference>
<dbReference type="PROSITE" id="PS51202">
    <property type="entry name" value="RCK_C"/>
    <property type="match status" value="2"/>
</dbReference>
<gene>
    <name evidence="1" type="primary">ybjL</name>
    <name type="ordered locus">ECED1_0811</name>
</gene>
<organism>
    <name type="scientific">Escherichia coli O81 (strain ED1a)</name>
    <dbReference type="NCBI Taxonomy" id="585397"/>
    <lineage>
        <taxon>Bacteria</taxon>
        <taxon>Pseudomonadati</taxon>
        <taxon>Pseudomonadota</taxon>
        <taxon>Gammaproteobacteria</taxon>
        <taxon>Enterobacterales</taxon>
        <taxon>Enterobacteriaceae</taxon>
        <taxon>Escherichia</taxon>
    </lineage>
</organism>
<accession>B7MQV0</accession>
<proteinExistence type="inferred from homology"/>
<evidence type="ECO:0000255" key="1">
    <source>
        <dbReference type="HAMAP-Rule" id="MF_01015"/>
    </source>
</evidence>
<reference key="1">
    <citation type="journal article" date="2009" name="PLoS Genet.">
        <title>Organised genome dynamics in the Escherichia coli species results in highly diverse adaptive paths.</title>
        <authorList>
            <person name="Touchon M."/>
            <person name="Hoede C."/>
            <person name="Tenaillon O."/>
            <person name="Barbe V."/>
            <person name="Baeriswyl S."/>
            <person name="Bidet P."/>
            <person name="Bingen E."/>
            <person name="Bonacorsi S."/>
            <person name="Bouchier C."/>
            <person name="Bouvet O."/>
            <person name="Calteau A."/>
            <person name="Chiapello H."/>
            <person name="Clermont O."/>
            <person name="Cruveiller S."/>
            <person name="Danchin A."/>
            <person name="Diard M."/>
            <person name="Dossat C."/>
            <person name="Karoui M.E."/>
            <person name="Frapy E."/>
            <person name="Garry L."/>
            <person name="Ghigo J.M."/>
            <person name="Gilles A.M."/>
            <person name="Johnson J."/>
            <person name="Le Bouguenec C."/>
            <person name="Lescat M."/>
            <person name="Mangenot S."/>
            <person name="Martinez-Jehanne V."/>
            <person name="Matic I."/>
            <person name="Nassif X."/>
            <person name="Oztas S."/>
            <person name="Petit M.A."/>
            <person name="Pichon C."/>
            <person name="Rouy Z."/>
            <person name="Ruf C.S."/>
            <person name="Schneider D."/>
            <person name="Tourret J."/>
            <person name="Vacherie B."/>
            <person name="Vallenet D."/>
            <person name="Medigue C."/>
            <person name="Rocha E.P.C."/>
            <person name="Denamur E."/>
        </authorList>
    </citation>
    <scope>NUCLEOTIDE SEQUENCE [LARGE SCALE GENOMIC DNA]</scope>
    <source>
        <strain>ED1a</strain>
    </source>
</reference>
<keyword id="KW-1003">Cell membrane</keyword>
<keyword id="KW-0472">Membrane</keyword>
<keyword id="KW-0677">Repeat</keyword>
<keyword id="KW-0812">Transmembrane</keyword>
<keyword id="KW-1133">Transmembrane helix</keyword>
<keyword id="KW-0813">Transport</keyword>
<protein>
    <recommendedName>
        <fullName evidence="1">Putative transport protein YbjL</fullName>
    </recommendedName>
</protein>
<comment type="subcellular location">
    <subcellularLocation>
        <location evidence="1">Cell membrane</location>
        <topology evidence="1">Multi-pass membrane protein</topology>
    </subcellularLocation>
</comment>
<comment type="similarity">
    <text evidence="1">Belongs to the AAE transporter (TC 2.A.81) family. YbjL subfamily.</text>
</comment>
<feature type="chain" id="PRO_1000148995" description="Putative transport protein YbjL">
    <location>
        <begin position="1"/>
        <end position="561"/>
    </location>
</feature>
<feature type="transmembrane region" description="Helical" evidence="1">
    <location>
        <begin position="8"/>
        <end position="28"/>
    </location>
</feature>
<feature type="transmembrane region" description="Helical" evidence="1">
    <location>
        <begin position="32"/>
        <end position="52"/>
    </location>
</feature>
<feature type="transmembrane region" description="Helical" evidence="1">
    <location>
        <begin position="66"/>
        <end position="86"/>
    </location>
</feature>
<feature type="transmembrane region" description="Helical" evidence="1">
    <location>
        <begin position="94"/>
        <end position="114"/>
    </location>
</feature>
<feature type="transmembrane region" description="Helical" evidence="1">
    <location>
        <begin position="158"/>
        <end position="178"/>
    </location>
</feature>
<feature type="transmembrane region" description="Helical" evidence="1">
    <location>
        <begin position="383"/>
        <end position="403"/>
    </location>
</feature>
<feature type="transmembrane region" description="Helical" evidence="1">
    <location>
        <begin position="406"/>
        <end position="426"/>
    </location>
</feature>
<feature type="transmembrane region" description="Helical" evidence="1">
    <location>
        <begin position="451"/>
        <end position="471"/>
    </location>
</feature>
<feature type="transmembrane region" description="Helical" evidence="1">
    <location>
        <begin position="475"/>
        <end position="495"/>
    </location>
</feature>
<feature type="transmembrane region" description="Helical" evidence="1">
    <location>
        <begin position="540"/>
        <end position="560"/>
    </location>
</feature>
<feature type="domain" description="RCK C-terminal 1" evidence="1">
    <location>
        <begin position="200"/>
        <end position="288"/>
    </location>
</feature>
<feature type="domain" description="RCK C-terminal 2" evidence="1">
    <location>
        <begin position="292"/>
        <end position="373"/>
    </location>
</feature>
<sequence length="561" mass="60351">MNINVAELLNGNYILLLFVVLALGLCLGKLRLGSIQLGNSIGVLVVSLLLGQQHFSINTDALNLGFMLFIFCVGVEAGPNFFSIFFRDGKNYLMLALVMVGSALVIALGLGKLFGWDIGLTAGMLAGSMTSTPVLVGAGDTLRHSGMESRQLSLALDNLSLGYALTYLIGLVSLIVGARYLPKLQHQDLQTSAQQIARERGLDTDANRKVYLPVIRAYRVGPELVAWTDGKNLRELGIYRQTGCYIERIRRNGILANPDGDAVLQMGDEIALVGYPDAHARLDPSFRNGKEVFDRDLLDMRIVTEEVVVKNHNAVGKRLAQLKLTDHGCFLNRVIRSQIEMPIDDNVVLNKGDVLQVSGDARRVKTIADRIGFISIHSQVTDLLAFCAFFVIGLMIGMITFQFSTFSFGMGNAAGLLFAGIMLGFMRANHPTFGYIPQGALSMVKEFGLMVFMAGVGLSAGSGINNGLGAIGGQMLIAGLIVSLVPVVICFLFGAYVLRMNRALLFGAMMGARTCAPAMEIISDTARSNIPALGYAGTYAIANVLLTLAGTIIVMVWPGLG</sequence>